<proteinExistence type="inferred from homology"/>
<gene>
    <name evidence="1" type="primary">mnmG</name>
    <name evidence="1" type="synonym">gidA</name>
    <name type="ordered locus">Bind_1285</name>
</gene>
<feature type="chain" id="PRO_0000345242" description="tRNA uridine 5-carboxymethylaminomethyl modification enzyme MnmG">
    <location>
        <begin position="1"/>
        <end position="618"/>
    </location>
</feature>
<feature type="binding site" evidence="1">
    <location>
        <begin position="11"/>
        <end position="16"/>
    </location>
    <ligand>
        <name>FAD</name>
        <dbReference type="ChEBI" id="CHEBI:57692"/>
    </ligand>
</feature>
<feature type="binding site" evidence="1">
    <location>
        <begin position="269"/>
        <end position="283"/>
    </location>
    <ligand>
        <name>NAD(+)</name>
        <dbReference type="ChEBI" id="CHEBI:57540"/>
    </ligand>
</feature>
<comment type="function">
    <text evidence="1">NAD-binding protein involved in the addition of a carboxymethylaminomethyl (cmnm) group at the wobble position (U34) of certain tRNAs, forming tRNA-cmnm(5)s(2)U34.</text>
</comment>
<comment type="cofactor">
    <cofactor evidence="1">
        <name>FAD</name>
        <dbReference type="ChEBI" id="CHEBI:57692"/>
    </cofactor>
</comment>
<comment type="subunit">
    <text evidence="1">Homodimer. Heterotetramer of two MnmE and two MnmG subunits.</text>
</comment>
<comment type="subcellular location">
    <subcellularLocation>
        <location evidence="1">Cytoplasm</location>
    </subcellularLocation>
</comment>
<comment type="similarity">
    <text evidence="1">Belongs to the MnmG family.</text>
</comment>
<reference key="1">
    <citation type="journal article" date="2010" name="J. Bacteriol.">
        <title>Complete genome sequence of Beijerinckia indica subsp. indica.</title>
        <authorList>
            <person name="Tamas I."/>
            <person name="Dedysh S.N."/>
            <person name="Liesack W."/>
            <person name="Stott M.B."/>
            <person name="Alam M."/>
            <person name="Murrell J.C."/>
            <person name="Dunfield P.F."/>
        </authorList>
    </citation>
    <scope>NUCLEOTIDE SEQUENCE [LARGE SCALE GENOMIC DNA]</scope>
    <source>
        <strain>ATCC 9039 / DSM 1715 / NCIMB 8712</strain>
    </source>
</reference>
<accession>B2IJQ4</accession>
<keyword id="KW-0963">Cytoplasm</keyword>
<keyword id="KW-0274">FAD</keyword>
<keyword id="KW-0285">Flavoprotein</keyword>
<keyword id="KW-0520">NAD</keyword>
<keyword id="KW-1185">Reference proteome</keyword>
<keyword id="KW-0819">tRNA processing</keyword>
<organism>
    <name type="scientific">Beijerinckia indica subsp. indica (strain ATCC 9039 / DSM 1715 / NCIMB 8712)</name>
    <dbReference type="NCBI Taxonomy" id="395963"/>
    <lineage>
        <taxon>Bacteria</taxon>
        <taxon>Pseudomonadati</taxon>
        <taxon>Pseudomonadota</taxon>
        <taxon>Alphaproteobacteria</taxon>
        <taxon>Hyphomicrobiales</taxon>
        <taxon>Beijerinckiaceae</taxon>
        <taxon>Beijerinckia</taxon>
    </lineage>
</organism>
<dbReference type="EMBL" id="CP001016">
    <property type="protein sequence ID" value="ACB94926.1"/>
    <property type="molecule type" value="Genomic_DNA"/>
</dbReference>
<dbReference type="RefSeq" id="WP_012384283.1">
    <property type="nucleotide sequence ID" value="NC_010581.1"/>
</dbReference>
<dbReference type="SMR" id="B2IJQ4"/>
<dbReference type="STRING" id="395963.Bind_1285"/>
<dbReference type="KEGG" id="bid:Bind_1285"/>
<dbReference type="eggNOG" id="COG0445">
    <property type="taxonomic scope" value="Bacteria"/>
</dbReference>
<dbReference type="HOGENOM" id="CLU_007831_2_2_5"/>
<dbReference type="OrthoDB" id="9815560at2"/>
<dbReference type="Proteomes" id="UP000001695">
    <property type="component" value="Chromosome"/>
</dbReference>
<dbReference type="GO" id="GO:0005829">
    <property type="term" value="C:cytosol"/>
    <property type="evidence" value="ECO:0007669"/>
    <property type="project" value="TreeGrafter"/>
</dbReference>
<dbReference type="GO" id="GO:0050660">
    <property type="term" value="F:flavin adenine dinucleotide binding"/>
    <property type="evidence" value="ECO:0007669"/>
    <property type="project" value="UniProtKB-UniRule"/>
</dbReference>
<dbReference type="GO" id="GO:0030488">
    <property type="term" value="P:tRNA methylation"/>
    <property type="evidence" value="ECO:0007669"/>
    <property type="project" value="TreeGrafter"/>
</dbReference>
<dbReference type="GO" id="GO:0002098">
    <property type="term" value="P:tRNA wobble uridine modification"/>
    <property type="evidence" value="ECO:0007669"/>
    <property type="project" value="InterPro"/>
</dbReference>
<dbReference type="FunFam" id="1.10.150.570:FF:000001">
    <property type="entry name" value="tRNA uridine 5-carboxymethylaminomethyl modification enzyme MnmG"/>
    <property type="match status" value="1"/>
</dbReference>
<dbReference type="FunFam" id="3.50.50.60:FF:000002">
    <property type="entry name" value="tRNA uridine 5-carboxymethylaminomethyl modification enzyme MnmG"/>
    <property type="match status" value="1"/>
</dbReference>
<dbReference type="Gene3D" id="3.50.50.60">
    <property type="entry name" value="FAD/NAD(P)-binding domain"/>
    <property type="match status" value="2"/>
</dbReference>
<dbReference type="Gene3D" id="1.10.150.570">
    <property type="entry name" value="GidA associated domain, C-terminal subdomain"/>
    <property type="match status" value="1"/>
</dbReference>
<dbReference type="Gene3D" id="1.10.10.1800">
    <property type="entry name" value="tRNA uridine 5-carboxymethylaminomethyl modification enzyme MnmG/GidA"/>
    <property type="match status" value="1"/>
</dbReference>
<dbReference type="HAMAP" id="MF_00129">
    <property type="entry name" value="MnmG_GidA"/>
    <property type="match status" value="1"/>
</dbReference>
<dbReference type="InterPro" id="IPR036188">
    <property type="entry name" value="FAD/NAD-bd_sf"/>
</dbReference>
<dbReference type="InterPro" id="IPR049312">
    <property type="entry name" value="GIDA_C_N"/>
</dbReference>
<dbReference type="InterPro" id="IPR004416">
    <property type="entry name" value="MnmG"/>
</dbReference>
<dbReference type="InterPro" id="IPR002218">
    <property type="entry name" value="MnmG-rel"/>
</dbReference>
<dbReference type="InterPro" id="IPR020595">
    <property type="entry name" value="MnmG-rel_CS"/>
</dbReference>
<dbReference type="InterPro" id="IPR026904">
    <property type="entry name" value="MnmG_C"/>
</dbReference>
<dbReference type="InterPro" id="IPR047001">
    <property type="entry name" value="MnmG_C_subdom"/>
</dbReference>
<dbReference type="InterPro" id="IPR044920">
    <property type="entry name" value="MnmG_C_subdom_sf"/>
</dbReference>
<dbReference type="InterPro" id="IPR040131">
    <property type="entry name" value="MnmG_N"/>
</dbReference>
<dbReference type="NCBIfam" id="TIGR00136">
    <property type="entry name" value="mnmG_gidA"/>
    <property type="match status" value="1"/>
</dbReference>
<dbReference type="PANTHER" id="PTHR11806">
    <property type="entry name" value="GLUCOSE INHIBITED DIVISION PROTEIN A"/>
    <property type="match status" value="1"/>
</dbReference>
<dbReference type="PANTHER" id="PTHR11806:SF0">
    <property type="entry name" value="PROTEIN MTO1 HOMOLOG, MITOCHONDRIAL"/>
    <property type="match status" value="1"/>
</dbReference>
<dbReference type="Pfam" id="PF01134">
    <property type="entry name" value="GIDA"/>
    <property type="match status" value="1"/>
</dbReference>
<dbReference type="Pfam" id="PF21680">
    <property type="entry name" value="GIDA_C_1st"/>
    <property type="match status" value="1"/>
</dbReference>
<dbReference type="Pfam" id="PF13932">
    <property type="entry name" value="SAM_GIDA_C"/>
    <property type="match status" value="1"/>
</dbReference>
<dbReference type="SMART" id="SM01228">
    <property type="entry name" value="GIDA_assoc_3"/>
    <property type="match status" value="1"/>
</dbReference>
<dbReference type="SUPFAM" id="SSF51905">
    <property type="entry name" value="FAD/NAD(P)-binding domain"/>
    <property type="match status" value="1"/>
</dbReference>
<dbReference type="PROSITE" id="PS01280">
    <property type="entry name" value="GIDA_1"/>
    <property type="match status" value="1"/>
</dbReference>
<dbReference type="PROSITE" id="PS01281">
    <property type="entry name" value="GIDA_2"/>
    <property type="match status" value="1"/>
</dbReference>
<name>MNMG_BEII9</name>
<protein>
    <recommendedName>
        <fullName evidence="1">tRNA uridine 5-carboxymethylaminomethyl modification enzyme MnmG</fullName>
    </recommendedName>
    <alternativeName>
        <fullName evidence="1">Glucose-inhibited division protein A</fullName>
    </alternativeName>
</protein>
<evidence type="ECO:0000255" key="1">
    <source>
        <dbReference type="HAMAP-Rule" id="MF_00129"/>
    </source>
</evidence>
<sequence length="618" mass="66135">MKGTYDVVVVGGGHAGCEAAAASARLGARTALVTQAFATIGSMSCNPAIGGLGKGHLVREIDALDGLMGRVADAAGIQFRVLNRAKGPAVRGPRAQADRKLYRAAMQAEIQAVNGLDVIEGEAEGLCFDGEKIAGVLVGVETLACAAVVLTTGTFLRGLIHIGEKQVRAGRIGEAPAEAMGLALEALGLSMGRLKTGTPARLDGRSIDWSRLERQSGDVEPEPFSFLTEAITRPQVDCFITTTTPETHAVIRENLHYSPVYSGAINGRGPRYCPSIEDKVVRFADREAHQIFLEPEGLDVPTIYPNGISTALPESVQERFLRTIPGLEHVAILQHGYAIEYDYVDPRELTAGLEVKRVPGLFLAGQINGTTGYEEAGAQGLIAGLNAAARAGGLAPITFDRSEAYLGVMIDDLINRGVSEPYRMFTSRAEYRLTLRADNADQRLTGKGMILGCIGQQRAEIFKAKSEALNSARDLLAGLSLSPTEATRHGLKVNRDGVRRTAFDLLALPDVTLETLRSIWPELKTIPETIAAQIEIDAHYAVYLDRQEADIAAFRRDEGLALPTDLDYASMQGLSNEIRGRLAAIRPATLGQAGRIEGMTPTALTLLAARVRRAGAHA</sequence>